<feature type="chain" id="PRO_0000226514" description="Small ribosomal subunit protein uS7">
    <location>
        <begin position="1"/>
        <end position="156"/>
    </location>
</feature>
<proteinExistence type="inferred from homology"/>
<organism>
    <name type="scientific">Syntrophotalea carbinolica (strain DSM 2380 / NBRC 103641 / GraBd1)</name>
    <name type="common">Pelobacter carbinolicus</name>
    <dbReference type="NCBI Taxonomy" id="338963"/>
    <lineage>
        <taxon>Bacteria</taxon>
        <taxon>Pseudomonadati</taxon>
        <taxon>Thermodesulfobacteriota</taxon>
        <taxon>Desulfuromonadia</taxon>
        <taxon>Desulfuromonadales</taxon>
        <taxon>Syntrophotaleaceae</taxon>
        <taxon>Syntrophotalea</taxon>
    </lineage>
</organism>
<accession>Q3A6Q1</accession>
<gene>
    <name evidence="1" type="primary">rpsG</name>
    <name type="ordered locus">Pcar_0697</name>
</gene>
<dbReference type="EMBL" id="CP000142">
    <property type="protein sequence ID" value="ABA87956.1"/>
    <property type="molecule type" value="Genomic_DNA"/>
</dbReference>
<dbReference type="RefSeq" id="WP_011340399.1">
    <property type="nucleotide sequence ID" value="NC_007498.2"/>
</dbReference>
<dbReference type="SMR" id="Q3A6Q1"/>
<dbReference type="STRING" id="338963.Pcar_0697"/>
<dbReference type="KEGG" id="pca:Pcar_0697"/>
<dbReference type="eggNOG" id="COG0049">
    <property type="taxonomic scope" value="Bacteria"/>
</dbReference>
<dbReference type="HOGENOM" id="CLU_072226_1_1_7"/>
<dbReference type="OrthoDB" id="9807653at2"/>
<dbReference type="Proteomes" id="UP000002534">
    <property type="component" value="Chromosome"/>
</dbReference>
<dbReference type="GO" id="GO:0015935">
    <property type="term" value="C:small ribosomal subunit"/>
    <property type="evidence" value="ECO:0007669"/>
    <property type="project" value="InterPro"/>
</dbReference>
<dbReference type="GO" id="GO:0019843">
    <property type="term" value="F:rRNA binding"/>
    <property type="evidence" value="ECO:0007669"/>
    <property type="project" value="UniProtKB-UniRule"/>
</dbReference>
<dbReference type="GO" id="GO:0003735">
    <property type="term" value="F:structural constituent of ribosome"/>
    <property type="evidence" value="ECO:0007669"/>
    <property type="project" value="InterPro"/>
</dbReference>
<dbReference type="GO" id="GO:0000049">
    <property type="term" value="F:tRNA binding"/>
    <property type="evidence" value="ECO:0007669"/>
    <property type="project" value="UniProtKB-UniRule"/>
</dbReference>
<dbReference type="GO" id="GO:0006412">
    <property type="term" value="P:translation"/>
    <property type="evidence" value="ECO:0007669"/>
    <property type="project" value="UniProtKB-UniRule"/>
</dbReference>
<dbReference type="CDD" id="cd14869">
    <property type="entry name" value="uS7_Bacteria"/>
    <property type="match status" value="1"/>
</dbReference>
<dbReference type="FunFam" id="1.10.455.10:FF:000001">
    <property type="entry name" value="30S ribosomal protein S7"/>
    <property type="match status" value="1"/>
</dbReference>
<dbReference type="Gene3D" id="1.10.455.10">
    <property type="entry name" value="Ribosomal protein S7 domain"/>
    <property type="match status" value="1"/>
</dbReference>
<dbReference type="HAMAP" id="MF_00480_B">
    <property type="entry name" value="Ribosomal_uS7_B"/>
    <property type="match status" value="1"/>
</dbReference>
<dbReference type="InterPro" id="IPR000235">
    <property type="entry name" value="Ribosomal_uS7"/>
</dbReference>
<dbReference type="InterPro" id="IPR005717">
    <property type="entry name" value="Ribosomal_uS7_bac/org-type"/>
</dbReference>
<dbReference type="InterPro" id="IPR020606">
    <property type="entry name" value="Ribosomal_uS7_CS"/>
</dbReference>
<dbReference type="InterPro" id="IPR023798">
    <property type="entry name" value="Ribosomal_uS7_dom"/>
</dbReference>
<dbReference type="InterPro" id="IPR036823">
    <property type="entry name" value="Ribosomal_uS7_dom_sf"/>
</dbReference>
<dbReference type="NCBIfam" id="TIGR01029">
    <property type="entry name" value="rpsG_bact"/>
    <property type="match status" value="1"/>
</dbReference>
<dbReference type="PANTHER" id="PTHR11205">
    <property type="entry name" value="RIBOSOMAL PROTEIN S7"/>
    <property type="match status" value="1"/>
</dbReference>
<dbReference type="Pfam" id="PF00177">
    <property type="entry name" value="Ribosomal_S7"/>
    <property type="match status" value="1"/>
</dbReference>
<dbReference type="PIRSF" id="PIRSF002122">
    <property type="entry name" value="RPS7p_RPS7a_RPS5e_RPS7o"/>
    <property type="match status" value="1"/>
</dbReference>
<dbReference type="SUPFAM" id="SSF47973">
    <property type="entry name" value="Ribosomal protein S7"/>
    <property type="match status" value="1"/>
</dbReference>
<dbReference type="PROSITE" id="PS00052">
    <property type="entry name" value="RIBOSOMAL_S7"/>
    <property type="match status" value="1"/>
</dbReference>
<name>RS7_SYNC1</name>
<evidence type="ECO:0000255" key="1">
    <source>
        <dbReference type="HAMAP-Rule" id="MF_00480"/>
    </source>
</evidence>
<evidence type="ECO:0000305" key="2"/>
<sequence length="156" mass="17728">MPRRREVAKRVILPDPKYNDRTVAKFINAIMLMGKKSTAEGIVYGAFDLIAERSGEEALDVFKKAVENIRPMLEVKSRRVGGSTYQVPVEVRADRRNALAIRWLILYARGRGEKTMVERLAGELLDAAANRGAAVKKREDTHRMAEANKAFAHYRW</sequence>
<protein>
    <recommendedName>
        <fullName evidence="1">Small ribosomal subunit protein uS7</fullName>
    </recommendedName>
    <alternativeName>
        <fullName evidence="2">30S ribosomal protein S7</fullName>
    </alternativeName>
</protein>
<comment type="function">
    <text evidence="1">One of the primary rRNA binding proteins, it binds directly to 16S rRNA where it nucleates assembly of the head domain of the 30S subunit. Is located at the subunit interface close to the decoding center, probably blocks exit of the E-site tRNA.</text>
</comment>
<comment type="subunit">
    <text evidence="1">Part of the 30S ribosomal subunit. Contacts proteins S9 and S11.</text>
</comment>
<comment type="similarity">
    <text evidence="1">Belongs to the universal ribosomal protein uS7 family.</text>
</comment>
<reference key="1">
    <citation type="submission" date="2005-10" db="EMBL/GenBank/DDBJ databases">
        <title>Complete sequence of Pelobacter carbinolicus DSM 2380.</title>
        <authorList>
            <person name="Copeland A."/>
            <person name="Lucas S."/>
            <person name="Lapidus A."/>
            <person name="Barry K."/>
            <person name="Detter J.C."/>
            <person name="Glavina T."/>
            <person name="Hammon N."/>
            <person name="Israni S."/>
            <person name="Pitluck S."/>
            <person name="Chertkov O."/>
            <person name="Schmutz J."/>
            <person name="Larimer F."/>
            <person name="Land M."/>
            <person name="Kyrpides N."/>
            <person name="Ivanova N."/>
            <person name="Richardson P."/>
        </authorList>
    </citation>
    <scope>NUCLEOTIDE SEQUENCE [LARGE SCALE GENOMIC DNA]</scope>
    <source>
        <strain>DSM 2380 / NBRC 103641 / GraBd1</strain>
    </source>
</reference>
<keyword id="KW-1185">Reference proteome</keyword>
<keyword id="KW-0687">Ribonucleoprotein</keyword>
<keyword id="KW-0689">Ribosomal protein</keyword>
<keyword id="KW-0694">RNA-binding</keyword>
<keyword id="KW-0699">rRNA-binding</keyword>
<keyword id="KW-0820">tRNA-binding</keyword>